<organism>
    <name type="scientific">Caenorhabditis elegans</name>
    <dbReference type="NCBI Taxonomy" id="6239"/>
    <lineage>
        <taxon>Eukaryota</taxon>
        <taxon>Metazoa</taxon>
        <taxon>Ecdysozoa</taxon>
        <taxon>Nematoda</taxon>
        <taxon>Chromadorea</taxon>
        <taxon>Rhabditida</taxon>
        <taxon>Rhabditina</taxon>
        <taxon>Rhabditomorpha</taxon>
        <taxon>Rhabditoidea</taxon>
        <taxon>Rhabditidae</taxon>
        <taxon>Peloderinae</taxon>
        <taxon>Caenorhabditis</taxon>
    </lineage>
</organism>
<reference key="1">
    <citation type="journal article" date="1998" name="Science">
        <title>Genome sequence of the nematode C. elegans: a platform for investigating biology.</title>
        <authorList>
            <consortium name="The C. elegans sequencing consortium"/>
        </authorList>
    </citation>
    <scope>NUCLEOTIDE SEQUENCE [LARGE SCALE GENOMIC DNA]</scope>
    <source>
        <strain>Bristol N2</strain>
    </source>
</reference>
<keyword id="KW-0032">Aminotransferase</keyword>
<keyword id="KW-0496">Mitochondrion</keyword>
<keyword id="KW-0531">Neurotransmitter degradation</keyword>
<keyword id="KW-0663">Pyridoxal phosphate</keyword>
<keyword id="KW-1185">Reference proteome</keyword>
<keyword id="KW-0808">Transferase</keyword>
<keyword id="KW-0809">Transit peptide</keyword>
<protein>
    <recommendedName>
        <fullName>Probable 4-aminobutyrate aminotransferase, mitochondrial</fullName>
        <ecNumber>2.6.1.19</ecNumber>
    </recommendedName>
    <alternativeName>
        <fullName>(S)-3-amino-2-methylpropionate transaminase</fullName>
        <ecNumber>2.6.1.22</ecNumber>
    </alternativeName>
    <alternativeName>
        <fullName>GABA aminotransferase</fullName>
        <shortName>GABA-AT</shortName>
    </alternativeName>
    <alternativeName>
        <fullName>Gamma-amino-N-butyrate transaminase</fullName>
        <shortName>GABA transaminase</shortName>
    </alternativeName>
    <alternativeName>
        <fullName>L-AIBAT</fullName>
    </alternativeName>
</protein>
<gene>
    <name type="primary">gta-1</name>
    <name type="ORF">K04D7.3</name>
</gene>
<accession>Q21217</accession>
<sequence>MLPRLAKSSLIQQVRGVSAIANAEPSGPSISTSIPGPKSKALKQEMDKVHQTTSVRFHVDYEKSFGNYVVDADGNALLDVYTQISSLPLGYNHPDLVKVASQPHLITSLVSRPALGSFPRTDFADGISHALTSIAPKGLKAVQTMLCGTSANENAIKTAFIWYQAQRRGGLGPDALHLESCMNQQKPGTPNLSVMGFEGAFHGRSLCMLSVTRSKPIHKVDIPAFDWPIAKFPRYKYPLDQNVAYNKKQDQECLADVEAKISEWKRRDNDVAAIIVEPIQAEGGDHYGSPAFFQGLRDITSKHGIVFIVDEVQTGGGATGDIWAHDHWNLSSPPDMVTFSKKLLTGGYFYGEHLRVKEAYRIYNTWMGDPTKLLLLEKAVEVIKRDGLIEQSREVGAEFQKRLGELQASSGGKLDQARGRGTFAAVDFPSGSLRDKFVDLAISNGLHCGGCGDRSLRFRPSLVYTKKHLDLTFDLLDKTLKGL</sequence>
<feature type="transit peptide" description="Mitochondrion" evidence="1">
    <location>
        <begin position="1"/>
        <end status="unknown"/>
    </location>
</feature>
<feature type="chain" id="PRO_0000001254" description="Probable 4-aminobutyrate aminotransferase, mitochondrial">
    <location>
        <begin status="unknown"/>
        <end position="483"/>
    </location>
</feature>
<feature type="binding site" description="in other chain" evidence="2">
    <location>
        <begin position="148"/>
        <end position="149"/>
    </location>
    <ligand>
        <name>pyridoxal 5'-phosphate</name>
        <dbReference type="ChEBI" id="CHEBI:597326"/>
        <note>ligand shared between dimeric partners</note>
    </ligand>
</feature>
<feature type="binding site" evidence="2">
    <location>
        <position position="204"/>
    </location>
    <ligand>
        <name>substrate</name>
    </ligand>
</feature>
<feature type="binding site" evidence="2">
    <location>
        <position position="365"/>
    </location>
    <ligand>
        <name>pyridoxal 5'-phosphate</name>
        <dbReference type="ChEBI" id="CHEBI:597326"/>
        <note>ligand shared between dimeric partners</note>
    </ligand>
</feature>
<feature type="modified residue" description="N6-(pyridoxal phosphate)lysine" evidence="2">
    <location>
        <position position="341"/>
    </location>
</feature>
<name>GABT_CAEEL</name>
<comment type="catalytic activity">
    <reaction>
        <text>4-aminobutanoate + 2-oxoglutarate = succinate semialdehyde + L-glutamate</text>
        <dbReference type="Rhea" id="RHEA:23352"/>
        <dbReference type="ChEBI" id="CHEBI:16810"/>
        <dbReference type="ChEBI" id="CHEBI:29985"/>
        <dbReference type="ChEBI" id="CHEBI:57706"/>
        <dbReference type="ChEBI" id="CHEBI:59888"/>
        <dbReference type="EC" id="2.6.1.19"/>
    </reaction>
</comment>
<comment type="catalytic activity">
    <reaction>
        <text>(S)-3-amino-2-methylpropanoate + 2-oxoglutarate = 2-methyl-3-oxopropanoate + L-glutamate</text>
        <dbReference type="Rhea" id="RHEA:13993"/>
        <dbReference type="ChEBI" id="CHEBI:16810"/>
        <dbReference type="ChEBI" id="CHEBI:29985"/>
        <dbReference type="ChEBI" id="CHEBI:57700"/>
        <dbReference type="ChEBI" id="CHEBI:58655"/>
        <dbReference type="EC" id="2.6.1.22"/>
    </reaction>
</comment>
<comment type="cofactor">
    <cofactor evidence="2">
        <name>pyridoxal 5'-phosphate</name>
        <dbReference type="ChEBI" id="CHEBI:597326"/>
    </cofactor>
</comment>
<comment type="subunit">
    <text evidence="2">Homodimer.</text>
</comment>
<comment type="subcellular location">
    <subcellularLocation>
        <location evidence="1">Mitochondrion matrix</location>
    </subcellularLocation>
</comment>
<comment type="similarity">
    <text evidence="3">Belongs to the class-III pyridoxal-phosphate-dependent aminotransferase family.</text>
</comment>
<evidence type="ECO:0000250" key="1"/>
<evidence type="ECO:0000250" key="2">
    <source>
        <dbReference type="UniProtKB" id="P80147"/>
    </source>
</evidence>
<evidence type="ECO:0000305" key="3"/>
<dbReference type="EC" id="2.6.1.19"/>
<dbReference type="EC" id="2.6.1.22"/>
<dbReference type="EMBL" id="Z69664">
    <property type="protein sequence ID" value="CAA93517.1"/>
    <property type="molecule type" value="Genomic_DNA"/>
</dbReference>
<dbReference type="PIR" id="T23312">
    <property type="entry name" value="T23312"/>
</dbReference>
<dbReference type="RefSeq" id="NP_501862.1">
    <property type="nucleotide sequence ID" value="NM_069461.5"/>
</dbReference>
<dbReference type="SMR" id="Q21217"/>
<dbReference type="BioGRID" id="42999">
    <property type="interactions" value="42"/>
</dbReference>
<dbReference type="FunCoup" id="Q21217">
    <property type="interactions" value="1629"/>
</dbReference>
<dbReference type="STRING" id="6239.K04D7.3a.1"/>
<dbReference type="PaxDb" id="6239-K04D7.3a"/>
<dbReference type="PeptideAtlas" id="Q21217"/>
<dbReference type="EnsemblMetazoa" id="K04D7.3a.1">
    <property type="protein sequence ID" value="K04D7.3a.1"/>
    <property type="gene ID" value="WBGene00001794"/>
</dbReference>
<dbReference type="GeneID" id="177897"/>
<dbReference type="KEGG" id="cel:CELE_K04D7.3"/>
<dbReference type="UCSC" id="K04D7.3">
    <property type="organism name" value="c. elegans"/>
</dbReference>
<dbReference type="AGR" id="WB:WBGene00001794"/>
<dbReference type="CTD" id="177897"/>
<dbReference type="WormBase" id="K04D7.3a">
    <property type="protein sequence ID" value="CE06092"/>
    <property type="gene ID" value="WBGene00001794"/>
    <property type="gene designation" value="gta-1"/>
</dbReference>
<dbReference type="eggNOG" id="KOG1405">
    <property type="taxonomic scope" value="Eukaryota"/>
</dbReference>
<dbReference type="GeneTree" id="ENSGT00550000074885"/>
<dbReference type="InParanoid" id="Q21217"/>
<dbReference type="OMA" id="GLMCAFD"/>
<dbReference type="OrthoDB" id="5419315at2759"/>
<dbReference type="PhylomeDB" id="Q21217"/>
<dbReference type="Reactome" id="R-CEL-916853">
    <property type="pathway name" value="Degradation of GABA"/>
</dbReference>
<dbReference type="PRO" id="PR:Q21217"/>
<dbReference type="Proteomes" id="UP000001940">
    <property type="component" value="Chromosome IV"/>
</dbReference>
<dbReference type="Bgee" id="WBGene00001794">
    <property type="expression patterns" value="Expressed in larva and 4 other cell types or tissues"/>
</dbReference>
<dbReference type="ExpressionAtlas" id="Q21217">
    <property type="expression patterns" value="baseline and differential"/>
</dbReference>
<dbReference type="GO" id="GO:0005759">
    <property type="term" value="C:mitochondrial matrix"/>
    <property type="evidence" value="ECO:0007669"/>
    <property type="project" value="UniProtKB-SubCell"/>
</dbReference>
<dbReference type="GO" id="GO:0005739">
    <property type="term" value="C:mitochondrion"/>
    <property type="evidence" value="ECO:0007005"/>
    <property type="project" value="WormBase"/>
</dbReference>
<dbReference type="GO" id="GO:0047298">
    <property type="term" value="F:(S)-3-amino-2-methylpropionate transaminase activity"/>
    <property type="evidence" value="ECO:0007669"/>
    <property type="project" value="UniProtKB-EC"/>
</dbReference>
<dbReference type="GO" id="GO:0034386">
    <property type="term" value="F:4-aminobutyrate:2-oxoglutarate transaminase activity"/>
    <property type="evidence" value="ECO:0007669"/>
    <property type="project" value="UniProtKB-EC"/>
</dbReference>
<dbReference type="GO" id="GO:0030170">
    <property type="term" value="F:pyridoxal phosphate binding"/>
    <property type="evidence" value="ECO:0000318"/>
    <property type="project" value="GO_Central"/>
</dbReference>
<dbReference type="GO" id="GO:0009450">
    <property type="term" value="P:gamma-aminobutyric acid catabolic process"/>
    <property type="evidence" value="ECO:0000318"/>
    <property type="project" value="GO_Central"/>
</dbReference>
<dbReference type="CDD" id="cd00610">
    <property type="entry name" value="OAT_like"/>
    <property type="match status" value="1"/>
</dbReference>
<dbReference type="FunFam" id="3.40.640.10:FF:000073">
    <property type="entry name" value="Probable 4-aminobutyrate aminotransferase"/>
    <property type="match status" value="1"/>
</dbReference>
<dbReference type="Gene3D" id="3.90.1150.10">
    <property type="entry name" value="Aspartate Aminotransferase, domain 1"/>
    <property type="match status" value="1"/>
</dbReference>
<dbReference type="Gene3D" id="3.40.640.10">
    <property type="entry name" value="Type I PLP-dependent aspartate aminotransferase-like (Major domain)"/>
    <property type="match status" value="1"/>
</dbReference>
<dbReference type="InterPro" id="IPR004631">
    <property type="entry name" value="4NH2But_aminotransferase_euk"/>
</dbReference>
<dbReference type="InterPro" id="IPR005814">
    <property type="entry name" value="Aminotrans_3"/>
</dbReference>
<dbReference type="InterPro" id="IPR049704">
    <property type="entry name" value="Aminotrans_3_PPA_site"/>
</dbReference>
<dbReference type="InterPro" id="IPR015424">
    <property type="entry name" value="PyrdxlP-dep_Trfase"/>
</dbReference>
<dbReference type="InterPro" id="IPR015421">
    <property type="entry name" value="PyrdxlP-dep_Trfase_major"/>
</dbReference>
<dbReference type="InterPro" id="IPR015422">
    <property type="entry name" value="PyrdxlP-dep_Trfase_small"/>
</dbReference>
<dbReference type="NCBIfam" id="TIGR00699">
    <property type="entry name" value="GABAtrns_euk"/>
    <property type="match status" value="1"/>
</dbReference>
<dbReference type="PANTHER" id="PTHR43206:SF1">
    <property type="entry name" value="4-AMINOBUTYRATE AMINOTRANSFERASE, MITOCHONDRIAL"/>
    <property type="match status" value="1"/>
</dbReference>
<dbReference type="PANTHER" id="PTHR43206">
    <property type="entry name" value="AMINOTRANSFERASE"/>
    <property type="match status" value="1"/>
</dbReference>
<dbReference type="Pfam" id="PF00202">
    <property type="entry name" value="Aminotran_3"/>
    <property type="match status" value="1"/>
</dbReference>
<dbReference type="PIRSF" id="PIRSF000521">
    <property type="entry name" value="Transaminase_4ab_Lys_Orn"/>
    <property type="match status" value="1"/>
</dbReference>
<dbReference type="SUPFAM" id="SSF53383">
    <property type="entry name" value="PLP-dependent transferases"/>
    <property type="match status" value="1"/>
</dbReference>
<dbReference type="PROSITE" id="PS00600">
    <property type="entry name" value="AA_TRANSFER_CLASS_3"/>
    <property type="match status" value="1"/>
</dbReference>
<proteinExistence type="inferred from homology"/>